<name>PANC_HERAR</name>
<reference key="1">
    <citation type="journal article" date="2007" name="PLoS Genet.">
        <title>A tale of two oxidation states: bacterial colonization of arsenic-rich environments.</title>
        <authorList>
            <person name="Muller D."/>
            <person name="Medigue C."/>
            <person name="Koechler S."/>
            <person name="Barbe V."/>
            <person name="Barakat M."/>
            <person name="Talla E."/>
            <person name="Bonnefoy V."/>
            <person name="Krin E."/>
            <person name="Arsene-Ploetze F."/>
            <person name="Carapito C."/>
            <person name="Chandler M."/>
            <person name="Cournoyer B."/>
            <person name="Cruveiller S."/>
            <person name="Dossat C."/>
            <person name="Duval S."/>
            <person name="Heymann M."/>
            <person name="Leize E."/>
            <person name="Lieutaud A."/>
            <person name="Lievremont D."/>
            <person name="Makita Y."/>
            <person name="Mangenot S."/>
            <person name="Nitschke W."/>
            <person name="Ortet P."/>
            <person name="Perdrial N."/>
            <person name="Schoepp B."/>
            <person name="Siguier P."/>
            <person name="Simeonova D.D."/>
            <person name="Rouy Z."/>
            <person name="Segurens B."/>
            <person name="Turlin E."/>
            <person name="Vallenet D."/>
            <person name="van Dorsselaer A."/>
            <person name="Weiss S."/>
            <person name="Weissenbach J."/>
            <person name="Lett M.-C."/>
            <person name="Danchin A."/>
            <person name="Bertin P.N."/>
        </authorList>
    </citation>
    <scope>NUCLEOTIDE SEQUENCE [LARGE SCALE GENOMIC DNA]</scope>
    <source>
        <strain>ULPAs1</strain>
    </source>
</reference>
<sequence length="279" mass="31383">MKIISCIEELRDHLRGQLRTAFVPTMGNLHDGHLSLMRLARKHGDPVVASIFVNRLQFGPNEDFDRYPRTFQADVEKLEKEGVYILFAPTEKDLYPEPQEFRVQPPNDLGNTLEGEFRPGFFSGVTTIVLKLFSCVQPSVAVFGKKDYQQLMIVRNMSKQFALPTEIIAAETYRAEDGLALSSRNMYLSAEERAEAPALFKSLNAVANEVRSGHLDIFQLERQAMADLSQRGWKPDYISIRKRSNLQPPSAGDMAQGEKLVVLAAAKLGATRLIDNLEI</sequence>
<gene>
    <name evidence="1" type="primary">panC</name>
    <name type="ordered locus">HEAR0974</name>
</gene>
<dbReference type="EC" id="6.3.2.1" evidence="1"/>
<dbReference type="EMBL" id="CU207211">
    <property type="protein sequence ID" value="CAL61157.1"/>
    <property type="molecule type" value="Genomic_DNA"/>
</dbReference>
<dbReference type="SMR" id="A4G3S0"/>
<dbReference type="STRING" id="204773.HEAR0974"/>
<dbReference type="KEGG" id="har:HEAR0974"/>
<dbReference type="eggNOG" id="COG0414">
    <property type="taxonomic scope" value="Bacteria"/>
</dbReference>
<dbReference type="HOGENOM" id="CLU_047148_0_0_4"/>
<dbReference type="OrthoDB" id="9773087at2"/>
<dbReference type="UniPathway" id="UPA00028">
    <property type="reaction ID" value="UER00005"/>
</dbReference>
<dbReference type="Proteomes" id="UP000006697">
    <property type="component" value="Chromosome"/>
</dbReference>
<dbReference type="GO" id="GO:0005829">
    <property type="term" value="C:cytosol"/>
    <property type="evidence" value="ECO:0007669"/>
    <property type="project" value="TreeGrafter"/>
</dbReference>
<dbReference type="GO" id="GO:0005524">
    <property type="term" value="F:ATP binding"/>
    <property type="evidence" value="ECO:0007669"/>
    <property type="project" value="UniProtKB-KW"/>
</dbReference>
<dbReference type="GO" id="GO:0004592">
    <property type="term" value="F:pantoate-beta-alanine ligase activity"/>
    <property type="evidence" value="ECO:0007669"/>
    <property type="project" value="UniProtKB-UniRule"/>
</dbReference>
<dbReference type="GO" id="GO:0015940">
    <property type="term" value="P:pantothenate biosynthetic process"/>
    <property type="evidence" value="ECO:0007669"/>
    <property type="project" value="UniProtKB-UniRule"/>
</dbReference>
<dbReference type="CDD" id="cd00560">
    <property type="entry name" value="PanC"/>
    <property type="match status" value="1"/>
</dbReference>
<dbReference type="Gene3D" id="3.40.50.620">
    <property type="entry name" value="HUPs"/>
    <property type="match status" value="1"/>
</dbReference>
<dbReference type="Gene3D" id="3.30.1300.10">
    <property type="entry name" value="Pantoate-beta-alanine ligase, C-terminal domain"/>
    <property type="match status" value="1"/>
</dbReference>
<dbReference type="HAMAP" id="MF_00158">
    <property type="entry name" value="PanC"/>
    <property type="match status" value="1"/>
</dbReference>
<dbReference type="InterPro" id="IPR003721">
    <property type="entry name" value="Pantoate_ligase"/>
</dbReference>
<dbReference type="InterPro" id="IPR042176">
    <property type="entry name" value="Pantoate_ligase_C"/>
</dbReference>
<dbReference type="InterPro" id="IPR014729">
    <property type="entry name" value="Rossmann-like_a/b/a_fold"/>
</dbReference>
<dbReference type="NCBIfam" id="TIGR00018">
    <property type="entry name" value="panC"/>
    <property type="match status" value="1"/>
</dbReference>
<dbReference type="PANTHER" id="PTHR21299">
    <property type="entry name" value="CYTIDYLATE KINASE/PANTOATE-BETA-ALANINE LIGASE"/>
    <property type="match status" value="1"/>
</dbReference>
<dbReference type="PANTHER" id="PTHR21299:SF1">
    <property type="entry name" value="PANTOATE--BETA-ALANINE LIGASE"/>
    <property type="match status" value="1"/>
</dbReference>
<dbReference type="Pfam" id="PF02569">
    <property type="entry name" value="Pantoate_ligase"/>
    <property type="match status" value="1"/>
</dbReference>
<dbReference type="SUPFAM" id="SSF52374">
    <property type="entry name" value="Nucleotidylyl transferase"/>
    <property type="match status" value="1"/>
</dbReference>
<accession>A4G3S0</accession>
<keyword id="KW-0067">ATP-binding</keyword>
<keyword id="KW-0963">Cytoplasm</keyword>
<keyword id="KW-0436">Ligase</keyword>
<keyword id="KW-0547">Nucleotide-binding</keyword>
<keyword id="KW-0566">Pantothenate biosynthesis</keyword>
<keyword id="KW-1185">Reference proteome</keyword>
<organism>
    <name type="scientific">Herminiimonas arsenicoxydans</name>
    <dbReference type="NCBI Taxonomy" id="204773"/>
    <lineage>
        <taxon>Bacteria</taxon>
        <taxon>Pseudomonadati</taxon>
        <taxon>Pseudomonadota</taxon>
        <taxon>Betaproteobacteria</taxon>
        <taxon>Burkholderiales</taxon>
        <taxon>Oxalobacteraceae</taxon>
        <taxon>Herminiimonas</taxon>
    </lineage>
</organism>
<protein>
    <recommendedName>
        <fullName evidence="1">Pantothenate synthetase</fullName>
        <shortName evidence="1">PS</shortName>
        <ecNumber evidence="1">6.3.2.1</ecNumber>
    </recommendedName>
    <alternativeName>
        <fullName evidence="1">Pantoate--beta-alanine ligase</fullName>
    </alternativeName>
    <alternativeName>
        <fullName evidence="1">Pantoate-activating enzyme</fullName>
    </alternativeName>
</protein>
<comment type="function">
    <text evidence="1">Catalyzes the condensation of pantoate with beta-alanine in an ATP-dependent reaction via a pantoyl-adenylate intermediate.</text>
</comment>
<comment type="catalytic activity">
    <reaction evidence="1">
        <text>(R)-pantoate + beta-alanine + ATP = (R)-pantothenate + AMP + diphosphate + H(+)</text>
        <dbReference type="Rhea" id="RHEA:10912"/>
        <dbReference type="ChEBI" id="CHEBI:15378"/>
        <dbReference type="ChEBI" id="CHEBI:15980"/>
        <dbReference type="ChEBI" id="CHEBI:29032"/>
        <dbReference type="ChEBI" id="CHEBI:30616"/>
        <dbReference type="ChEBI" id="CHEBI:33019"/>
        <dbReference type="ChEBI" id="CHEBI:57966"/>
        <dbReference type="ChEBI" id="CHEBI:456215"/>
        <dbReference type="EC" id="6.3.2.1"/>
    </reaction>
</comment>
<comment type="pathway">
    <text evidence="1">Cofactor biosynthesis; (R)-pantothenate biosynthesis; (R)-pantothenate from (R)-pantoate and beta-alanine: step 1/1.</text>
</comment>
<comment type="subunit">
    <text evidence="1">Homodimer.</text>
</comment>
<comment type="subcellular location">
    <subcellularLocation>
        <location evidence="1">Cytoplasm</location>
    </subcellularLocation>
</comment>
<comment type="miscellaneous">
    <text evidence="1">The reaction proceeds by a bi uni uni bi ping pong mechanism.</text>
</comment>
<comment type="similarity">
    <text evidence="1">Belongs to the pantothenate synthetase family.</text>
</comment>
<feature type="chain" id="PRO_0000305466" description="Pantothenate synthetase">
    <location>
        <begin position="1"/>
        <end position="279"/>
    </location>
</feature>
<feature type="active site" description="Proton donor" evidence="1">
    <location>
        <position position="33"/>
    </location>
</feature>
<feature type="binding site" evidence="1">
    <location>
        <begin position="26"/>
        <end position="33"/>
    </location>
    <ligand>
        <name>ATP</name>
        <dbReference type="ChEBI" id="CHEBI:30616"/>
    </ligand>
</feature>
<feature type="binding site" evidence="1">
    <location>
        <position position="57"/>
    </location>
    <ligand>
        <name>(R)-pantoate</name>
        <dbReference type="ChEBI" id="CHEBI:15980"/>
    </ligand>
</feature>
<feature type="binding site" evidence="1">
    <location>
        <position position="57"/>
    </location>
    <ligand>
        <name>beta-alanine</name>
        <dbReference type="ChEBI" id="CHEBI:57966"/>
    </ligand>
</feature>
<feature type="binding site" evidence="1">
    <location>
        <begin position="144"/>
        <end position="147"/>
    </location>
    <ligand>
        <name>ATP</name>
        <dbReference type="ChEBI" id="CHEBI:30616"/>
    </ligand>
</feature>
<feature type="binding site" evidence="1">
    <location>
        <position position="150"/>
    </location>
    <ligand>
        <name>(R)-pantoate</name>
        <dbReference type="ChEBI" id="CHEBI:15980"/>
    </ligand>
</feature>
<feature type="binding site" evidence="1">
    <location>
        <begin position="181"/>
        <end position="184"/>
    </location>
    <ligand>
        <name>ATP</name>
        <dbReference type="ChEBI" id="CHEBI:30616"/>
    </ligand>
</feature>
<proteinExistence type="inferred from homology"/>
<evidence type="ECO:0000255" key="1">
    <source>
        <dbReference type="HAMAP-Rule" id="MF_00158"/>
    </source>
</evidence>